<reference evidence="3" key="1">
    <citation type="journal article" date="2009" name="Peptides">
        <title>Neuropeptides in Heteroptera: identification of allatotropin-related peptide and tachykinin-related peptides using MALDI-TOF mass spectrometry.</title>
        <authorList>
            <person name="Neupert S."/>
            <person name="Russell W.K."/>
            <person name="Russell D.H."/>
            <person name="Lopez J.D. Jr."/>
            <person name="Predel R."/>
            <person name="Nachman R.J."/>
        </authorList>
    </citation>
    <scope>PROTEIN SEQUENCE</scope>
    <scope>SUBCELLULAR LOCATION</scope>
    <scope>TISSUE SPECIFICITY</scope>
    <scope>AMIDATION AT ARG-10</scope>
    <source>
        <tissue evidence="1">Antennal lobe</tissue>
    </source>
</reference>
<proteinExistence type="evidence at protein level"/>
<dbReference type="GO" id="GO:0005576">
    <property type="term" value="C:extracellular region"/>
    <property type="evidence" value="ECO:0007005"/>
    <property type="project" value="UniProtKB"/>
</dbReference>
<dbReference type="GO" id="GO:0007218">
    <property type="term" value="P:neuropeptide signaling pathway"/>
    <property type="evidence" value="ECO:0007669"/>
    <property type="project" value="UniProtKB-KW"/>
</dbReference>
<sequence>APVMGFQGMR</sequence>
<feature type="peptide" id="PRO_0000395666" description="Tachykinin-related peptide 5" evidence="1">
    <location>
        <begin position="1"/>
        <end position="10"/>
    </location>
</feature>
<feature type="modified residue" description="Arginine amide" evidence="1">
    <location>
        <position position="10"/>
    </location>
</feature>
<accession>P86598</accession>
<name>TRP5_PYRAP</name>
<comment type="subcellular location">
    <subcellularLocation>
        <location evidence="1 3">Secreted</location>
    </subcellularLocation>
</comment>
<comment type="tissue specificity">
    <text evidence="1">Expressed in the antennal lobe (at protein level).</text>
</comment>
<protein>
    <recommendedName>
        <fullName evidence="2">Tachykinin-related peptide 5</fullName>
        <shortName evidence="2">TKRP-5</shortName>
    </recommendedName>
</protein>
<evidence type="ECO:0000269" key="1">
    <source>
    </source>
</evidence>
<evidence type="ECO:0000303" key="2">
    <source>
    </source>
</evidence>
<evidence type="ECO:0000305" key="3"/>
<keyword id="KW-0027">Amidation</keyword>
<keyword id="KW-0903">Direct protein sequencing</keyword>
<keyword id="KW-0527">Neuropeptide</keyword>
<keyword id="KW-0964">Secreted</keyword>
<organism>
    <name type="scientific">Pyrrhocoris apterus</name>
    <name type="common">Sap sucking bug</name>
    <name type="synonym">Cimex apterus</name>
    <dbReference type="NCBI Taxonomy" id="37000"/>
    <lineage>
        <taxon>Eukaryota</taxon>
        <taxon>Metazoa</taxon>
        <taxon>Ecdysozoa</taxon>
        <taxon>Arthropoda</taxon>
        <taxon>Hexapoda</taxon>
        <taxon>Insecta</taxon>
        <taxon>Pterygota</taxon>
        <taxon>Neoptera</taxon>
        <taxon>Paraneoptera</taxon>
        <taxon>Hemiptera</taxon>
        <taxon>Heteroptera</taxon>
        <taxon>Panheteroptera</taxon>
        <taxon>Pentatomomorpha</taxon>
        <taxon>Pyrrhocoroidea</taxon>
        <taxon>Pyrrhocoridae</taxon>
        <taxon>Pyrrhocoris</taxon>
    </lineage>
</organism>